<protein>
    <recommendedName>
        <fullName evidence="1">UDP-N-acetylenolpyruvoylglucosamine reductase</fullName>
        <ecNumber evidence="1">1.3.1.98</ecNumber>
    </recommendedName>
    <alternativeName>
        <fullName evidence="1">UDP-N-acetylmuramate dehydrogenase</fullName>
    </alternativeName>
</protein>
<evidence type="ECO:0000255" key="1">
    <source>
        <dbReference type="HAMAP-Rule" id="MF_00037"/>
    </source>
</evidence>
<feature type="chain" id="PRO_1000002921" description="UDP-N-acetylenolpyruvoylglucosamine reductase">
    <location>
        <begin position="1"/>
        <end position="295"/>
    </location>
</feature>
<feature type="domain" description="FAD-binding PCMH-type" evidence="1">
    <location>
        <begin position="23"/>
        <end position="188"/>
    </location>
</feature>
<feature type="active site" evidence="1">
    <location>
        <position position="167"/>
    </location>
</feature>
<feature type="active site" description="Proton donor" evidence="1">
    <location>
        <position position="217"/>
    </location>
</feature>
<feature type="active site" evidence="1">
    <location>
        <position position="287"/>
    </location>
</feature>
<comment type="function">
    <text evidence="1">Cell wall formation.</text>
</comment>
<comment type="catalytic activity">
    <reaction evidence="1">
        <text>UDP-N-acetyl-alpha-D-muramate + NADP(+) = UDP-N-acetyl-3-O-(1-carboxyvinyl)-alpha-D-glucosamine + NADPH + H(+)</text>
        <dbReference type="Rhea" id="RHEA:12248"/>
        <dbReference type="ChEBI" id="CHEBI:15378"/>
        <dbReference type="ChEBI" id="CHEBI:57783"/>
        <dbReference type="ChEBI" id="CHEBI:58349"/>
        <dbReference type="ChEBI" id="CHEBI:68483"/>
        <dbReference type="ChEBI" id="CHEBI:70757"/>
        <dbReference type="EC" id="1.3.1.98"/>
    </reaction>
</comment>
<comment type="cofactor">
    <cofactor evidence="1">
        <name>FAD</name>
        <dbReference type="ChEBI" id="CHEBI:57692"/>
    </cofactor>
</comment>
<comment type="pathway">
    <text evidence="1">Cell wall biogenesis; peptidoglycan biosynthesis.</text>
</comment>
<comment type="subcellular location">
    <subcellularLocation>
        <location evidence="1">Cytoplasm</location>
    </subcellularLocation>
</comment>
<comment type="similarity">
    <text evidence="1">Belongs to the MurB family.</text>
</comment>
<reference key="1">
    <citation type="journal article" date="2006" name="Proc. Natl. Acad. Sci. U.S.A.">
        <title>Molecular genetic anatomy of inter- and intraserotype variation in the human bacterial pathogen group A Streptococcus.</title>
        <authorList>
            <person name="Beres S.B."/>
            <person name="Richter E.W."/>
            <person name="Nagiec M.J."/>
            <person name="Sumby P."/>
            <person name="Porcella S.F."/>
            <person name="DeLeo F.R."/>
            <person name="Musser J.M."/>
        </authorList>
    </citation>
    <scope>NUCLEOTIDE SEQUENCE [LARGE SCALE GENOMIC DNA]</scope>
    <source>
        <strain>MGAS10750</strain>
    </source>
</reference>
<gene>
    <name evidence="1" type="primary">murB</name>
    <name type="ordered locus">MGAS10750_Spy0976</name>
</gene>
<organism>
    <name type="scientific">Streptococcus pyogenes serotype M4 (strain MGAS10750)</name>
    <dbReference type="NCBI Taxonomy" id="370554"/>
    <lineage>
        <taxon>Bacteria</taxon>
        <taxon>Bacillati</taxon>
        <taxon>Bacillota</taxon>
        <taxon>Bacilli</taxon>
        <taxon>Lactobacillales</taxon>
        <taxon>Streptococcaceae</taxon>
        <taxon>Streptococcus</taxon>
    </lineage>
</organism>
<proteinExistence type="inferred from homology"/>
<accession>Q1J6Q7</accession>
<name>MURB_STRPF</name>
<keyword id="KW-0131">Cell cycle</keyword>
<keyword id="KW-0132">Cell division</keyword>
<keyword id="KW-0133">Cell shape</keyword>
<keyword id="KW-0961">Cell wall biogenesis/degradation</keyword>
<keyword id="KW-0963">Cytoplasm</keyword>
<keyword id="KW-0274">FAD</keyword>
<keyword id="KW-0285">Flavoprotein</keyword>
<keyword id="KW-0521">NADP</keyword>
<keyword id="KW-0560">Oxidoreductase</keyword>
<keyword id="KW-0573">Peptidoglycan synthesis</keyword>
<sequence>MITELHGIDIRENEPLKHYTYTKVGGPADFLAFPRNHYELSRIVAYANKENMPWLVLGNASNLIVRDGGIRGFVIMFDKLNAVHLNGYTLEAEAGANLIETTKIAKFHSLTGFEFACGIPGSIGGAVFMNAGAYGGEISHIFLSAKVLTSSGEIKTISARDMAFGYRHSAIQETGDIVISAKFALKPGNYDTISQEMNRLNHLRQLKQPLEFPSCGSVFKRPPGHFAGQLIMEANLKGHRIGGVEVSEKHAGFMINVADGTAKDYEDLIAYVIETVENHSGVRLEPEVRIIGENL</sequence>
<dbReference type="EC" id="1.3.1.98" evidence="1"/>
<dbReference type="EMBL" id="CP000262">
    <property type="protein sequence ID" value="ABF37926.1"/>
    <property type="molecule type" value="Genomic_DNA"/>
</dbReference>
<dbReference type="SMR" id="Q1J6Q7"/>
<dbReference type="KEGG" id="spi:MGAS10750_Spy0976"/>
<dbReference type="HOGENOM" id="CLU_035304_1_1_9"/>
<dbReference type="UniPathway" id="UPA00219"/>
<dbReference type="Proteomes" id="UP000002434">
    <property type="component" value="Chromosome"/>
</dbReference>
<dbReference type="GO" id="GO:0005829">
    <property type="term" value="C:cytosol"/>
    <property type="evidence" value="ECO:0007669"/>
    <property type="project" value="TreeGrafter"/>
</dbReference>
<dbReference type="GO" id="GO:0071949">
    <property type="term" value="F:FAD binding"/>
    <property type="evidence" value="ECO:0007669"/>
    <property type="project" value="InterPro"/>
</dbReference>
<dbReference type="GO" id="GO:0008762">
    <property type="term" value="F:UDP-N-acetylmuramate dehydrogenase activity"/>
    <property type="evidence" value="ECO:0007669"/>
    <property type="project" value="UniProtKB-UniRule"/>
</dbReference>
<dbReference type="GO" id="GO:0051301">
    <property type="term" value="P:cell division"/>
    <property type="evidence" value="ECO:0007669"/>
    <property type="project" value="UniProtKB-KW"/>
</dbReference>
<dbReference type="GO" id="GO:0071555">
    <property type="term" value="P:cell wall organization"/>
    <property type="evidence" value="ECO:0007669"/>
    <property type="project" value="UniProtKB-KW"/>
</dbReference>
<dbReference type="GO" id="GO:0009252">
    <property type="term" value="P:peptidoglycan biosynthetic process"/>
    <property type="evidence" value="ECO:0007669"/>
    <property type="project" value="UniProtKB-UniRule"/>
</dbReference>
<dbReference type="GO" id="GO:0008360">
    <property type="term" value="P:regulation of cell shape"/>
    <property type="evidence" value="ECO:0007669"/>
    <property type="project" value="UniProtKB-KW"/>
</dbReference>
<dbReference type="Gene3D" id="3.30.465.10">
    <property type="match status" value="1"/>
</dbReference>
<dbReference type="Gene3D" id="3.90.78.10">
    <property type="entry name" value="UDP-N-acetylenolpyruvoylglucosamine reductase, C-terminal domain"/>
    <property type="match status" value="1"/>
</dbReference>
<dbReference type="Gene3D" id="3.30.43.10">
    <property type="entry name" value="Uridine Diphospho-n-acetylenolpyruvylglucosamine Reductase, domain 2"/>
    <property type="match status" value="1"/>
</dbReference>
<dbReference type="HAMAP" id="MF_00037">
    <property type="entry name" value="MurB"/>
    <property type="match status" value="1"/>
</dbReference>
<dbReference type="InterPro" id="IPR016166">
    <property type="entry name" value="FAD-bd_PCMH"/>
</dbReference>
<dbReference type="InterPro" id="IPR036318">
    <property type="entry name" value="FAD-bd_PCMH-like_sf"/>
</dbReference>
<dbReference type="InterPro" id="IPR016167">
    <property type="entry name" value="FAD-bd_PCMH_sub1"/>
</dbReference>
<dbReference type="InterPro" id="IPR016169">
    <property type="entry name" value="FAD-bd_PCMH_sub2"/>
</dbReference>
<dbReference type="InterPro" id="IPR003170">
    <property type="entry name" value="MurB"/>
</dbReference>
<dbReference type="InterPro" id="IPR011601">
    <property type="entry name" value="MurB_C"/>
</dbReference>
<dbReference type="InterPro" id="IPR036635">
    <property type="entry name" value="MurB_C_sf"/>
</dbReference>
<dbReference type="InterPro" id="IPR006094">
    <property type="entry name" value="Oxid_FAD_bind_N"/>
</dbReference>
<dbReference type="NCBIfam" id="TIGR00179">
    <property type="entry name" value="murB"/>
    <property type="match status" value="1"/>
</dbReference>
<dbReference type="NCBIfam" id="NF010480">
    <property type="entry name" value="PRK13905.1"/>
    <property type="match status" value="1"/>
</dbReference>
<dbReference type="PANTHER" id="PTHR21071">
    <property type="entry name" value="UDP-N-ACETYLENOLPYRUVOYLGLUCOSAMINE REDUCTASE"/>
    <property type="match status" value="1"/>
</dbReference>
<dbReference type="PANTHER" id="PTHR21071:SF4">
    <property type="entry name" value="UDP-N-ACETYLENOLPYRUVOYLGLUCOSAMINE REDUCTASE"/>
    <property type="match status" value="1"/>
</dbReference>
<dbReference type="Pfam" id="PF01565">
    <property type="entry name" value="FAD_binding_4"/>
    <property type="match status" value="1"/>
</dbReference>
<dbReference type="Pfam" id="PF02873">
    <property type="entry name" value="MurB_C"/>
    <property type="match status" value="1"/>
</dbReference>
<dbReference type="SUPFAM" id="SSF56176">
    <property type="entry name" value="FAD-binding/transporter-associated domain-like"/>
    <property type="match status" value="1"/>
</dbReference>
<dbReference type="SUPFAM" id="SSF56194">
    <property type="entry name" value="Uridine diphospho-N-Acetylenolpyruvylglucosamine reductase, MurB, C-terminal domain"/>
    <property type="match status" value="1"/>
</dbReference>
<dbReference type="PROSITE" id="PS51387">
    <property type="entry name" value="FAD_PCMH"/>
    <property type="match status" value="1"/>
</dbReference>